<protein>
    <recommendedName>
        <fullName evidence="1">Photosystem II reaction center protein I</fullName>
        <shortName evidence="1">PSII-I</shortName>
    </recommendedName>
    <alternativeName>
        <fullName evidence="1">PSII 4.8 kDa protein</fullName>
    </alternativeName>
</protein>
<name>PSBI_PYRYE</name>
<reference key="1">
    <citation type="submission" date="2003-11" db="EMBL/GenBank/DDBJ databases">
        <title>Whole genome sequence of Porphyra yezoensis chloroplast.</title>
        <authorList>
            <person name="Kunimoto M."/>
            <person name="Morishima K."/>
            <person name="Yoshikawa M."/>
            <person name="Fukuda S."/>
            <person name="Kobayashi T."/>
            <person name="Kobayashi M."/>
            <person name="Okazaki T."/>
            <person name="Ohara I."/>
            <person name="Nakayama I."/>
        </authorList>
    </citation>
    <scope>NUCLEOTIDE SEQUENCE [LARGE SCALE GENOMIC DNA]</scope>
    <source>
        <strain>U-51</strain>
    </source>
</reference>
<feature type="chain" id="PRO_0000275817" description="Photosystem II reaction center protein I">
    <location>
        <begin position="1"/>
        <end position="38"/>
    </location>
</feature>
<feature type="transmembrane region" description="Helical" evidence="1">
    <location>
        <begin position="4"/>
        <end position="24"/>
    </location>
</feature>
<evidence type="ECO:0000255" key="1">
    <source>
        <dbReference type="HAMAP-Rule" id="MF_01316"/>
    </source>
</evidence>
<gene>
    <name evidence="1" type="primary">psbI</name>
</gene>
<sequence length="38" mass="4518">MFTLKIFVYTTVIFFISLFVFGFLSNDPSRNPNRKDLE</sequence>
<organism>
    <name type="scientific">Pyropia yezoensis</name>
    <name type="common">Susabi-nori</name>
    <name type="synonym">Porphyra yezoensis</name>
    <dbReference type="NCBI Taxonomy" id="2788"/>
    <lineage>
        <taxon>Eukaryota</taxon>
        <taxon>Rhodophyta</taxon>
        <taxon>Bangiophyceae</taxon>
        <taxon>Bangiales</taxon>
        <taxon>Bangiaceae</taxon>
        <taxon>Pyropia</taxon>
    </lineage>
</organism>
<keyword id="KW-0150">Chloroplast</keyword>
<keyword id="KW-0472">Membrane</keyword>
<keyword id="KW-0602">Photosynthesis</keyword>
<keyword id="KW-0604">Photosystem II</keyword>
<keyword id="KW-0934">Plastid</keyword>
<keyword id="KW-0674">Reaction center</keyword>
<keyword id="KW-0793">Thylakoid</keyword>
<keyword id="KW-0812">Transmembrane</keyword>
<keyword id="KW-1133">Transmembrane helix</keyword>
<proteinExistence type="inferred from homology"/>
<comment type="function">
    <text evidence="1">One of the components of the core complex of photosystem II (PSII), required for its stability and/or assembly. PSII is a light-driven water:plastoquinone oxidoreductase that uses light energy to abstract electrons from H(2)O, generating O(2) and a proton gradient subsequently used for ATP formation. It consists of a core antenna complex that captures photons, and an electron transfer chain that converts photonic excitation into a charge separation.</text>
</comment>
<comment type="subunit">
    <text evidence="1">PSII is composed of 1 copy each of membrane proteins PsbA, PsbB, PsbC, PsbD, PsbE, PsbF, PsbH, PsbI, PsbJ, PsbK, PsbL, PsbM, PsbT, PsbX, PsbY, PsbZ, Psb30/Ycf12, at least 3 peripheral proteins of the oxygen-evolving complex and a large number of cofactors. It forms dimeric complexes.</text>
</comment>
<comment type="subcellular location">
    <subcellularLocation>
        <location evidence="1">Plastid</location>
        <location evidence="1">Chloroplast thylakoid membrane</location>
        <topology evidence="1">Single-pass membrane protein</topology>
    </subcellularLocation>
</comment>
<comment type="similarity">
    <text evidence="1">Belongs to the PsbI family.</text>
</comment>
<dbReference type="EMBL" id="AP006715">
    <property type="protein sequence ID" value="BAE92360.1"/>
    <property type="molecule type" value="Genomic_DNA"/>
</dbReference>
<dbReference type="RefSeq" id="YP_536917.1">
    <property type="nucleotide sequence ID" value="NC_007932.1"/>
</dbReference>
<dbReference type="SMR" id="Q1XDQ1"/>
<dbReference type="GeneID" id="3978783"/>
<dbReference type="GO" id="GO:0009535">
    <property type="term" value="C:chloroplast thylakoid membrane"/>
    <property type="evidence" value="ECO:0007669"/>
    <property type="project" value="UniProtKB-SubCell"/>
</dbReference>
<dbReference type="GO" id="GO:0009539">
    <property type="term" value="C:photosystem II reaction center"/>
    <property type="evidence" value="ECO:0007669"/>
    <property type="project" value="InterPro"/>
</dbReference>
<dbReference type="GO" id="GO:0015979">
    <property type="term" value="P:photosynthesis"/>
    <property type="evidence" value="ECO:0007669"/>
    <property type="project" value="UniProtKB-UniRule"/>
</dbReference>
<dbReference type="HAMAP" id="MF_01316">
    <property type="entry name" value="PSII_PsbI"/>
    <property type="match status" value="1"/>
</dbReference>
<dbReference type="InterPro" id="IPR003686">
    <property type="entry name" value="PSII_PsbI"/>
</dbReference>
<dbReference type="InterPro" id="IPR037271">
    <property type="entry name" value="PSII_PsbI_sf"/>
</dbReference>
<dbReference type="NCBIfam" id="NF002735">
    <property type="entry name" value="PRK02655.1"/>
    <property type="match status" value="1"/>
</dbReference>
<dbReference type="PANTHER" id="PTHR35772">
    <property type="entry name" value="PHOTOSYSTEM II REACTION CENTER PROTEIN I"/>
    <property type="match status" value="1"/>
</dbReference>
<dbReference type="PANTHER" id="PTHR35772:SF1">
    <property type="entry name" value="PHOTOSYSTEM II REACTION CENTER PROTEIN I"/>
    <property type="match status" value="1"/>
</dbReference>
<dbReference type="Pfam" id="PF02532">
    <property type="entry name" value="PsbI"/>
    <property type="match status" value="1"/>
</dbReference>
<dbReference type="SUPFAM" id="SSF161041">
    <property type="entry name" value="Photosystem II reaction center protein I, PsbI"/>
    <property type="match status" value="1"/>
</dbReference>
<accession>Q1XDQ1</accession>
<geneLocation type="chloroplast"/>